<name>ADF11_ORYSJ</name>
<proteinExistence type="evidence at transcript level"/>
<dbReference type="EMBL" id="DP000011">
    <property type="protein sequence ID" value="ABA99516.1"/>
    <property type="molecule type" value="Genomic_DNA"/>
</dbReference>
<dbReference type="EMBL" id="AP008218">
    <property type="protein sequence ID" value="BAF30346.1"/>
    <property type="molecule type" value="Genomic_DNA"/>
</dbReference>
<dbReference type="EMBL" id="AP014968">
    <property type="protein sequence ID" value="BAT18194.1"/>
    <property type="molecule type" value="Genomic_DNA"/>
</dbReference>
<dbReference type="EMBL" id="CM000149">
    <property type="protein sequence ID" value="EAZ21297.1"/>
    <property type="molecule type" value="Genomic_DNA"/>
</dbReference>
<dbReference type="EMBL" id="AK121150">
    <property type="protein sequence ID" value="BAH00342.1"/>
    <property type="molecule type" value="mRNA"/>
</dbReference>
<dbReference type="RefSeq" id="XP_015618885.1">
    <property type="nucleotide sequence ID" value="XM_015763399.1"/>
</dbReference>
<dbReference type="SMR" id="Q2QLT8"/>
<dbReference type="FunCoup" id="Q2QLT8">
    <property type="interactions" value="2884"/>
</dbReference>
<dbReference type="STRING" id="39947.Q2QLT8"/>
<dbReference type="PaxDb" id="39947-Q2QLT8"/>
<dbReference type="EnsemblPlants" id="Os12t0628100-01">
    <property type="protein sequence ID" value="Os12t0628100-01"/>
    <property type="gene ID" value="Os12g0628100"/>
</dbReference>
<dbReference type="Gramene" id="Os12t0628100-01">
    <property type="protein sequence ID" value="Os12t0628100-01"/>
    <property type="gene ID" value="Os12g0628100"/>
</dbReference>
<dbReference type="KEGG" id="dosa:Os12g0628100"/>
<dbReference type="eggNOG" id="KOG1735">
    <property type="taxonomic scope" value="Eukaryota"/>
</dbReference>
<dbReference type="HOGENOM" id="CLU_094004_2_2_1"/>
<dbReference type="InParanoid" id="Q2QLT8"/>
<dbReference type="OMA" id="KFEWQIN"/>
<dbReference type="OrthoDB" id="10249245at2759"/>
<dbReference type="Proteomes" id="UP000000763">
    <property type="component" value="Chromosome 12"/>
</dbReference>
<dbReference type="Proteomes" id="UP000007752">
    <property type="component" value="Chromosome 12"/>
</dbReference>
<dbReference type="Proteomes" id="UP000059680">
    <property type="component" value="Chromosome 12"/>
</dbReference>
<dbReference type="GO" id="GO:0015629">
    <property type="term" value="C:actin cytoskeleton"/>
    <property type="evidence" value="ECO:0000318"/>
    <property type="project" value="GO_Central"/>
</dbReference>
<dbReference type="GO" id="GO:0005737">
    <property type="term" value="C:cytoplasm"/>
    <property type="evidence" value="ECO:0000318"/>
    <property type="project" value="GO_Central"/>
</dbReference>
<dbReference type="GO" id="GO:0051015">
    <property type="term" value="F:actin filament binding"/>
    <property type="evidence" value="ECO:0000318"/>
    <property type="project" value="GO_Central"/>
</dbReference>
<dbReference type="GO" id="GO:0030042">
    <property type="term" value="P:actin filament depolymerization"/>
    <property type="evidence" value="ECO:0000318"/>
    <property type="project" value="GO_Central"/>
</dbReference>
<dbReference type="CDD" id="cd11286">
    <property type="entry name" value="ADF_cofilin_like"/>
    <property type="match status" value="1"/>
</dbReference>
<dbReference type="Gene3D" id="3.40.20.10">
    <property type="entry name" value="Severin"/>
    <property type="match status" value="1"/>
</dbReference>
<dbReference type="InterPro" id="IPR002108">
    <property type="entry name" value="ADF-H"/>
</dbReference>
<dbReference type="InterPro" id="IPR029006">
    <property type="entry name" value="ADF-H/Gelsolin-like_dom_sf"/>
</dbReference>
<dbReference type="InterPro" id="IPR017904">
    <property type="entry name" value="ADF/Cofilin"/>
</dbReference>
<dbReference type="PANTHER" id="PTHR11913">
    <property type="entry name" value="COFILIN-RELATED"/>
    <property type="match status" value="1"/>
</dbReference>
<dbReference type="Pfam" id="PF00241">
    <property type="entry name" value="Cofilin_ADF"/>
    <property type="match status" value="1"/>
</dbReference>
<dbReference type="SMART" id="SM00102">
    <property type="entry name" value="ADF"/>
    <property type="match status" value="1"/>
</dbReference>
<dbReference type="SUPFAM" id="SSF55753">
    <property type="entry name" value="Actin depolymerizing proteins"/>
    <property type="match status" value="1"/>
</dbReference>
<dbReference type="PROSITE" id="PS51263">
    <property type="entry name" value="ADF_H"/>
    <property type="match status" value="1"/>
</dbReference>
<accession>Q2QLT8</accession>
<accession>A3CJN4</accession>
<comment type="function">
    <text evidence="1">Actin-depolymerizing protein. Severs actin filaments (F-actin) and binds to actin monomers (By similarity).</text>
</comment>
<comment type="similarity">
    <text evidence="3">Belongs to the actin-binding proteins ADF family.</text>
</comment>
<evidence type="ECO:0000250" key="1"/>
<evidence type="ECO:0000255" key="2">
    <source>
        <dbReference type="PROSITE-ProRule" id="PRU00599"/>
    </source>
</evidence>
<evidence type="ECO:0000305" key="3"/>
<evidence type="ECO:0000312" key="4">
    <source>
        <dbReference type="EMBL" id="EAZ21297.1"/>
    </source>
</evidence>
<feature type="chain" id="PRO_0000278114" description="Actin-depolymerizing factor 11">
    <location>
        <begin position="1"/>
        <end position="145"/>
    </location>
</feature>
<feature type="domain" description="ADF-H" evidence="2">
    <location>
        <begin position="11"/>
        <end position="145"/>
    </location>
</feature>
<organism>
    <name type="scientific">Oryza sativa subsp. japonica</name>
    <name type="common">Rice</name>
    <dbReference type="NCBI Taxonomy" id="39947"/>
    <lineage>
        <taxon>Eukaryota</taxon>
        <taxon>Viridiplantae</taxon>
        <taxon>Streptophyta</taxon>
        <taxon>Embryophyta</taxon>
        <taxon>Tracheophyta</taxon>
        <taxon>Spermatophyta</taxon>
        <taxon>Magnoliopsida</taxon>
        <taxon>Liliopsida</taxon>
        <taxon>Poales</taxon>
        <taxon>Poaceae</taxon>
        <taxon>BOP clade</taxon>
        <taxon>Oryzoideae</taxon>
        <taxon>Oryzeae</taxon>
        <taxon>Oryzinae</taxon>
        <taxon>Oryza</taxon>
        <taxon>Oryza sativa</taxon>
    </lineage>
</organism>
<gene>
    <name type="primary">ADF11</name>
    <name type="ordered locus">Os12g0628100</name>
    <name type="ordered locus">LOC_Os12g43340</name>
    <name evidence="4" type="ORF">OsJ_36950</name>
</gene>
<reference key="1">
    <citation type="journal article" date="2005" name="BMC Biol.">
        <title>The sequence of rice chromosomes 11 and 12, rich in disease resistance genes and recent gene duplications.</title>
        <authorList>
            <consortium name="The rice chromosomes 11 and 12 sequencing consortia"/>
        </authorList>
    </citation>
    <scope>NUCLEOTIDE SEQUENCE [LARGE SCALE GENOMIC DNA]</scope>
    <source>
        <strain>cv. Nipponbare</strain>
    </source>
</reference>
<reference key="2">
    <citation type="journal article" date="2005" name="Nature">
        <title>The map-based sequence of the rice genome.</title>
        <authorList>
            <consortium name="International rice genome sequencing project (IRGSP)"/>
        </authorList>
    </citation>
    <scope>NUCLEOTIDE SEQUENCE [LARGE SCALE GENOMIC DNA]</scope>
    <source>
        <strain>cv. Nipponbare</strain>
    </source>
</reference>
<reference key="3">
    <citation type="journal article" date="2008" name="Nucleic Acids Res.">
        <title>The rice annotation project database (RAP-DB): 2008 update.</title>
        <authorList>
            <consortium name="The rice annotation project (RAP)"/>
        </authorList>
    </citation>
    <scope>GENOME REANNOTATION</scope>
    <source>
        <strain>cv. Nipponbare</strain>
    </source>
</reference>
<reference key="4">
    <citation type="journal article" date="2013" name="Rice">
        <title>Improvement of the Oryza sativa Nipponbare reference genome using next generation sequence and optical map data.</title>
        <authorList>
            <person name="Kawahara Y."/>
            <person name="de la Bastide M."/>
            <person name="Hamilton J.P."/>
            <person name="Kanamori H."/>
            <person name="McCombie W.R."/>
            <person name="Ouyang S."/>
            <person name="Schwartz D.C."/>
            <person name="Tanaka T."/>
            <person name="Wu J."/>
            <person name="Zhou S."/>
            <person name="Childs K.L."/>
            <person name="Davidson R.M."/>
            <person name="Lin H."/>
            <person name="Quesada-Ocampo L."/>
            <person name="Vaillancourt B."/>
            <person name="Sakai H."/>
            <person name="Lee S.S."/>
            <person name="Kim J."/>
            <person name="Numa H."/>
            <person name="Itoh T."/>
            <person name="Buell C.R."/>
            <person name="Matsumoto T."/>
        </authorList>
    </citation>
    <scope>GENOME REANNOTATION</scope>
    <source>
        <strain>cv. Nipponbare</strain>
    </source>
</reference>
<reference key="5">
    <citation type="journal article" date="2005" name="PLoS Biol.">
        <title>The genomes of Oryza sativa: a history of duplications.</title>
        <authorList>
            <person name="Yu J."/>
            <person name="Wang J."/>
            <person name="Lin W."/>
            <person name="Li S."/>
            <person name="Li H."/>
            <person name="Zhou J."/>
            <person name="Ni P."/>
            <person name="Dong W."/>
            <person name="Hu S."/>
            <person name="Zeng C."/>
            <person name="Zhang J."/>
            <person name="Zhang Y."/>
            <person name="Li R."/>
            <person name="Xu Z."/>
            <person name="Li S."/>
            <person name="Li X."/>
            <person name="Zheng H."/>
            <person name="Cong L."/>
            <person name="Lin L."/>
            <person name="Yin J."/>
            <person name="Geng J."/>
            <person name="Li G."/>
            <person name="Shi J."/>
            <person name="Liu J."/>
            <person name="Lv H."/>
            <person name="Li J."/>
            <person name="Wang J."/>
            <person name="Deng Y."/>
            <person name="Ran L."/>
            <person name="Shi X."/>
            <person name="Wang X."/>
            <person name="Wu Q."/>
            <person name="Li C."/>
            <person name="Ren X."/>
            <person name="Wang J."/>
            <person name="Wang X."/>
            <person name="Li D."/>
            <person name="Liu D."/>
            <person name="Zhang X."/>
            <person name="Ji Z."/>
            <person name="Zhao W."/>
            <person name="Sun Y."/>
            <person name="Zhang Z."/>
            <person name="Bao J."/>
            <person name="Han Y."/>
            <person name="Dong L."/>
            <person name="Ji J."/>
            <person name="Chen P."/>
            <person name="Wu S."/>
            <person name="Liu J."/>
            <person name="Xiao Y."/>
            <person name="Bu D."/>
            <person name="Tan J."/>
            <person name="Yang L."/>
            <person name="Ye C."/>
            <person name="Zhang J."/>
            <person name="Xu J."/>
            <person name="Zhou Y."/>
            <person name="Yu Y."/>
            <person name="Zhang B."/>
            <person name="Zhuang S."/>
            <person name="Wei H."/>
            <person name="Liu B."/>
            <person name="Lei M."/>
            <person name="Yu H."/>
            <person name="Li Y."/>
            <person name="Xu H."/>
            <person name="Wei S."/>
            <person name="He X."/>
            <person name="Fang L."/>
            <person name="Zhang Z."/>
            <person name="Zhang Y."/>
            <person name="Huang X."/>
            <person name="Su Z."/>
            <person name="Tong W."/>
            <person name="Li J."/>
            <person name="Tong Z."/>
            <person name="Li S."/>
            <person name="Ye J."/>
            <person name="Wang L."/>
            <person name="Fang L."/>
            <person name="Lei T."/>
            <person name="Chen C.-S."/>
            <person name="Chen H.-C."/>
            <person name="Xu Z."/>
            <person name="Li H."/>
            <person name="Huang H."/>
            <person name="Zhang F."/>
            <person name="Xu H."/>
            <person name="Li N."/>
            <person name="Zhao C."/>
            <person name="Li S."/>
            <person name="Dong L."/>
            <person name="Huang Y."/>
            <person name="Li L."/>
            <person name="Xi Y."/>
            <person name="Qi Q."/>
            <person name="Li W."/>
            <person name="Zhang B."/>
            <person name="Hu W."/>
            <person name="Zhang Y."/>
            <person name="Tian X."/>
            <person name="Jiao Y."/>
            <person name="Liang X."/>
            <person name="Jin J."/>
            <person name="Gao L."/>
            <person name="Zheng W."/>
            <person name="Hao B."/>
            <person name="Liu S.-M."/>
            <person name="Wang W."/>
            <person name="Yuan L."/>
            <person name="Cao M."/>
            <person name="McDermott J."/>
            <person name="Samudrala R."/>
            <person name="Wang J."/>
            <person name="Wong G.K.-S."/>
            <person name="Yang H."/>
        </authorList>
    </citation>
    <scope>NUCLEOTIDE SEQUENCE [LARGE SCALE GENOMIC DNA]</scope>
    <source>
        <strain>cv. Nipponbare</strain>
    </source>
</reference>
<reference key="6">
    <citation type="journal article" date="2003" name="Science">
        <title>Collection, mapping, and annotation of over 28,000 cDNA clones from japonica rice.</title>
        <authorList>
            <consortium name="The rice full-length cDNA consortium"/>
        </authorList>
    </citation>
    <scope>NUCLEOTIDE SEQUENCE [LARGE SCALE MRNA]</scope>
    <source>
        <strain>cv. Nipponbare</strain>
    </source>
</reference>
<reference key="7">
    <citation type="journal article" date="2006" name="J. Plant Physiol.">
        <title>Comparative study of rice and Arabidopsis actin-depolymerizing factors gene families.</title>
        <authorList>
            <person name="Feng Y."/>
            <person name="Liu Q."/>
            <person name="Xue Q."/>
        </authorList>
    </citation>
    <scope>GENE FAMILY</scope>
</reference>
<keyword id="KW-0009">Actin-binding</keyword>
<keyword id="KW-1185">Reference proteome</keyword>
<sequence length="145" mass="16824">MAFVRSRANASSGIGVAAECKQTFLELQRKKSHRYVIFKIDDKCKEVVVEKTGSSTESFDDFMDSLPESDCRYAIYDFDFVTEENCQKSKIFFVAWSPSVSRIRAKMLYATSKERFRRELDGVHYEIQATDPSELDIELLRERAH</sequence>
<protein>
    <recommendedName>
        <fullName>Actin-depolymerizing factor 11</fullName>
        <shortName>ADF-11</shortName>
        <shortName>OsADF11</shortName>
    </recommendedName>
</protein>